<gene>
    <name type="ordered locus">MG331</name>
</gene>
<feature type="chain" id="PRO_0000210545" description="Uncharacterized protein MG331">
    <location>
        <begin position="1"/>
        <end position="212"/>
    </location>
</feature>
<feature type="transmembrane region" description="Helical" evidence="1">
    <location>
        <begin position="186"/>
        <end position="206"/>
    </location>
</feature>
<accession>P47573</accession>
<evidence type="ECO:0000255" key="1"/>
<evidence type="ECO:0000305" key="2"/>
<reference key="1">
    <citation type="journal article" date="1995" name="Science">
        <title>The minimal gene complement of Mycoplasma genitalium.</title>
        <authorList>
            <person name="Fraser C.M."/>
            <person name="Gocayne J.D."/>
            <person name="White O."/>
            <person name="Adams M.D."/>
            <person name="Clayton R.A."/>
            <person name="Fleischmann R.D."/>
            <person name="Bult C.J."/>
            <person name="Kerlavage A.R."/>
            <person name="Sutton G.G."/>
            <person name="Kelley J.M."/>
            <person name="Fritchman J.L."/>
            <person name="Weidman J.F."/>
            <person name="Small K.V."/>
            <person name="Sandusky M."/>
            <person name="Fuhrmann J.L."/>
            <person name="Nguyen D.T."/>
            <person name="Utterback T.R."/>
            <person name="Saudek D.M."/>
            <person name="Phillips C.A."/>
            <person name="Merrick J.M."/>
            <person name="Tomb J.-F."/>
            <person name="Dougherty B.A."/>
            <person name="Bott K.F."/>
            <person name="Hu P.-C."/>
            <person name="Lucier T.S."/>
            <person name="Peterson S.N."/>
            <person name="Smith H.O."/>
            <person name="Hutchison C.A. III"/>
            <person name="Venter J.C."/>
        </authorList>
    </citation>
    <scope>NUCLEOTIDE SEQUENCE [LARGE SCALE GENOMIC DNA]</scope>
    <source>
        <strain>ATCC 33530 / DSM 19775 / NCTC 10195 / G37</strain>
    </source>
</reference>
<sequence>MGRVEKFRFYRQSFDNNKIVKKALINAQKNTESWKKQLNKINQKILINYHPFSEFNKNPVKHHTEPNKLFKTLQELIVDLKNTDFKLLEEKVDRMWLNAAYNQTSSGYESWISDDKGIEKINHLSKFYEANEKQWLKKTSNLTSDLKEYNKILTVFSTESFAFKKSIDNIEPNLFNANKAIFKNLVITLISFMLFSILFFLIFLIVSFVSFV</sequence>
<dbReference type="EMBL" id="L43967">
    <property type="protein sequence ID" value="AAC71555.1"/>
    <property type="molecule type" value="Genomic_DNA"/>
</dbReference>
<dbReference type="PIR" id="F64236">
    <property type="entry name" value="F64236"/>
</dbReference>
<dbReference type="RefSeq" id="WP_010869436.1">
    <property type="nucleotide sequence ID" value="NC_000908.2"/>
</dbReference>
<dbReference type="SMR" id="P47573"/>
<dbReference type="STRING" id="243273.MG_331"/>
<dbReference type="GeneID" id="88282504"/>
<dbReference type="KEGG" id="mge:MG_331"/>
<dbReference type="eggNOG" id="ENOG5031ZA3">
    <property type="taxonomic scope" value="Bacteria"/>
</dbReference>
<dbReference type="HOGENOM" id="CLU_1314279_0_0_14"/>
<dbReference type="InParanoid" id="P47573"/>
<dbReference type="OrthoDB" id="400258at2"/>
<dbReference type="BioCyc" id="MGEN243273:G1GJ2-413-MONOMER"/>
<dbReference type="Proteomes" id="UP000000807">
    <property type="component" value="Chromosome"/>
</dbReference>
<dbReference type="GO" id="GO:0016020">
    <property type="term" value="C:membrane"/>
    <property type="evidence" value="ECO:0007669"/>
    <property type="project" value="UniProtKB-SubCell"/>
</dbReference>
<proteinExistence type="predicted"/>
<keyword id="KW-0472">Membrane</keyword>
<keyword id="KW-1185">Reference proteome</keyword>
<keyword id="KW-0812">Transmembrane</keyword>
<keyword id="KW-1133">Transmembrane helix</keyword>
<name>Y331_MYCGE</name>
<organism>
    <name type="scientific">Mycoplasma genitalium (strain ATCC 33530 / DSM 19775 / NCTC 10195 / G37)</name>
    <name type="common">Mycoplasmoides genitalium</name>
    <dbReference type="NCBI Taxonomy" id="243273"/>
    <lineage>
        <taxon>Bacteria</taxon>
        <taxon>Bacillati</taxon>
        <taxon>Mycoplasmatota</taxon>
        <taxon>Mycoplasmoidales</taxon>
        <taxon>Mycoplasmoidaceae</taxon>
        <taxon>Mycoplasmoides</taxon>
    </lineage>
</organism>
<comment type="subcellular location">
    <subcellularLocation>
        <location evidence="2">Membrane</location>
        <topology evidence="2">Single-pass membrane protein</topology>
    </subcellularLocation>
</comment>
<protein>
    <recommendedName>
        <fullName>Uncharacterized protein MG331</fullName>
    </recommendedName>
</protein>